<organism>
    <name type="scientific">Arabidopsis thaliana</name>
    <name type="common">Mouse-ear cress</name>
    <dbReference type="NCBI Taxonomy" id="3702"/>
    <lineage>
        <taxon>Eukaryota</taxon>
        <taxon>Viridiplantae</taxon>
        <taxon>Streptophyta</taxon>
        <taxon>Embryophyta</taxon>
        <taxon>Tracheophyta</taxon>
        <taxon>Spermatophyta</taxon>
        <taxon>Magnoliopsida</taxon>
        <taxon>eudicotyledons</taxon>
        <taxon>Gunneridae</taxon>
        <taxon>Pentapetalae</taxon>
        <taxon>rosids</taxon>
        <taxon>malvids</taxon>
        <taxon>Brassicales</taxon>
        <taxon>Brassicaceae</taxon>
        <taxon>Camelineae</taxon>
        <taxon>Arabidopsis</taxon>
    </lineage>
</organism>
<name>LONM4_ARATH</name>
<dbReference type="EC" id="3.4.21.53" evidence="2"/>
<dbReference type="EMBL" id="AC012393">
    <property type="protein sequence ID" value="AAF26081.1"/>
    <property type="molecule type" value="Genomic_DNA"/>
</dbReference>
<dbReference type="EMBL" id="CP002686">
    <property type="protein sequence ID" value="AEE74297.1"/>
    <property type="molecule type" value="Genomic_DNA"/>
</dbReference>
<dbReference type="RefSeq" id="NP_566259.1">
    <property type="nucleotide sequence ID" value="NM_111453.1"/>
</dbReference>
<dbReference type="SMR" id="Q9M9L7"/>
<dbReference type="FunCoup" id="Q9M9L7">
    <property type="interactions" value="2656"/>
</dbReference>
<dbReference type="STRING" id="3702.Q9M9L7"/>
<dbReference type="MEROPS" id="S16.A02"/>
<dbReference type="GlyGen" id="Q9M9L7">
    <property type="glycosylation" value="1 site"/>
</dbReference>
<dbReference type="PaxDb" id="3702-AT3G05790.1"/>
<dbReference type="ProteomicsDB" id="238473"/>
<dbReference type="EnsemblPlants" id="AT3G05790.1">
    <property type="protein sequence ID" value="AT3G05790.1"/>
    <property type="gene ID" value="AT3G05790"/>
</dbReference>
<dbReference type="GeneID" id="819748"/>
<dbReference type="Gramene" id="AT3G05790.1">
    <property type="protein sequence ID" value="AT3G05790.1"/>
    <property type="gene ID" value="AT3G05790"/>
</dbReference>
<dbReference type="KEGG" id="ath:AT3G05790"/>
<dbReference type="Araport" id="AT3G05790"/>
<dbReference type="TAIR" id="AT3G05790">
    <property type="gene designation" value="LON4"/>
</dbReference>
<dbReference type="eggNOG" id="KOG2004">
    <property type="taxonomic scope" value="Eukaryota"/>
</dbReference>
<dbReference type="HOGENOM" id="CLU_004109_1_0_1"/>
<dbReference type="InParanoid" id="Q9M9L7"/>
<dbReference type="PhylomeDB" id="Q9M9L7"/>
<dbReference type="PRO" id="PR:Q9M9L7"/>
<dbReference type="Proteomes" id="UP000006548">
    <property type="component" value="Chromosome 3"/>
</dbReference>
<dbReference type="ExpressionAtlas" id="Q9M9L7">
    <property type="expression patterns" value="baseline and differential"/>
</dbReference>
<dbReference type="GO" id="GO:0009507">
    <property type="term" value="C:chloroplast"/>
    <property type="evidence" value="ECO:0000314"/>
    <property type="project" value="TAIR"/>
</dbReference>
<dbReference type="GO" id="GO:0009535">
    <property type="term" value="C:chloroplast thylakoid membrane"/>
    <property type="evidence" value="ECO:0007669"/>
    <property type="project" value="UniProtKB-SubCell"/>
</dbReference>
<dbReference type="GO" id="GO:0005759">
    <property type="term" value="C:mitochondrial matrix"/>
    <property type="evidence" value="ECO:0007669"/>
    <property type="project" value="UniProtKB-SubCell"/>
</dbReference>
<dbReference type="GO" id="GO:0005739">
    <property type="term" value="C:mitochondrion"/>
    <property type="evidence" value="ECO:0000314"/>
    <property type="project" value="TAIR"/>
</dbReference>
<dbReference type="GO" id="GO:0005524">
    <property type="term" value="F:ATP binding"/>
    <property type="evidence" value="ECO:0007669"/>
    <property type="project" value="UniProtKB-UniRule"/>
</dbReference>
<dbReference type="GO" id="GO:0016887">
    <property type="term" value="F:ATP hydrolysis activity"/>
    <property type="evidence" value="ECO:0007669"/>
    <property type="project" value="UniProtKB-UniRule"/>
</dbReference>
<dbReference type="GO" id="GO:0004176">
    <property type="term" value="F:ATP-dependent peptidase activity"/>
    <property type="evidence" value="ECO:0007669"/>
    <property type="project" value="UniProtKB-UniRule"/>
</dbReference>
<dbReference type="GO" id="GO:0043565">
    <property type="term" value="F:sequence-specific DNA binding"/>
    <property type="evidence" value="ECO:0007669"/>
    <property type="project" value="UniProtKB-UniRule"/>
</dbReference>
<dbReference type="GO" id="GO:0004252">
    <property type="term" value="F:serine-type endopeptidase activity"/>
    <property type="evidence" value="ECO:0007669"/>
    <property type="project" value="UniProtKB-UniRule"/>
</dbReference>
<dbReference type="GO" id="GO:0034599">
    <property type="term" value="P:cellular response to oxidative stress"/>
    <property type="evidence" value="ECO:0007669"/>
    <property type="project" value="UniProtKB-UniRule"/>
</dbReference>
<dbReference type="GO" id="GO:0051131">
    <property type="term" value="P:chaperone-mediated protein complex assembly"/>
    <property type="evidence" value="ECO:0007669"/>
    <property type="project" value="UniProtKB-UniRule"/>
</dbReference>
<dbReference type="GO" id="GO:0070407">
    <property type="term" value="P:oxidation-dependent protein catabolic process"/>
    <property type="evidence" value="ECO:0007669"/>
    <property type="project" value="UniProtKB-UniRule"/>
</dbReference>
<dbReference type="GO" id="GO:0006515">
    <property type="term" value="P:protein quality control for misfolded or incompletely synthesized proteins"/>
    <property type="evidence" value="ECO:0007669"/>
    <property type="project" value="UniProtKB-UniRule"/>
</dbReference>
<dbReference type="CDD" id="cd19500">
    <property type="entry name" value="RecA-like_Lon"/>
    <property type="match status" value="1"/>
</dbReference>
<dbReference type="FunFam" id="3.40.50.300:FF:000021">
    <property type="entry name" value="Lon protease homolog"/>
    <property type="match status" value="1"/>
</dbReference>
<dbReference type="FunFam" id="1.10.8.60:FF:000080">
    <property type="entry name" value="Lon protease homolog, mitochondrial"/>
    <property type="match status" value="1"/>
</dbReference>
<dbReference type="FunFam" id="1.20.5.5270:FF:000001">
    <property type="entry name" value="Lon protease homolog, mitochondrial"/>
    <property type="match status" value="1"/>
</dbReference>
<dbReference type="FunFam" id="2.30.130.40:FF:000007">
    <property type="entry name" value="Lon protease homolog, mitochondrial"/>
    <property type="match status" value="1"/>
</dbReference>
<dbReference type="FunFam" id="3.30.230.10:FF:000015">
    <property type="entry name" value="Lon protease homolog, mitochondrial"/>
    <property type="match status" value="1"/>
</dbReference>
<dbReference type="Gene3D" id="1.10.8.60">
    <property type="match status" value="1"/>
</dbReference>
<dbReference type="Gene3D" id="1.20.5.5270">
    <property type="match status" value="1"/>
</dbReference>
<dbReference type="Gene3D" id="1.20.58.1480">
    <property type="match status" value="1"/>
</dbReference>
<dbReference type="Gene3D" id="3.30.230.10">
    <property type="match status" value="1"/>
</dbReference>
<dbReference type="Gene3D" id="2.30.130.40">
    <property type="entry name" value="LON domain-like"/>
    <property type="match status" value="1"/>
</dbReference>
<dbReference type="Gene3D" id="3.40.50.300">
    <property type="entry name" value="P-loop containing nucleotide triphosphate hydrolases"/>
    <property type="match status" value="1"/>
</dbReference>
<dbReference type="HAMAP" id="MF_03120">
    <property type="entry name" value="lonm_euk"/>
    <property type="match status" value="1"/>
</dbReference>
<dbReference type="InterPro" id="IPR003593">
    <property type="entry name" value="AAA+_ATPase"/>
</dbReference>
<dbReference type="InterPro" id="IPR003959">
    <property type="entry name" value="ATPase_AAA_core"/>
</dbReference>
<dbReference type="InterPro" id="IPR004815">
    <property type="entry name" value="Lon_bac/euk-typ"/>
</dbReference>
<dbReference type="InterPro" id="IPR054594">
    <property type="entry name" value="Lon_lid"/>
</dbReference>
<dbReference type="InterPro" id="IPR008269">
    <property type="entry name" value="Lon_proteolytic"/>
</dbReference>
<dbReference type="InterPro" id="IPR027065">
    <property type="entry name" value="Lon_Prtase"/>
</dbReference>
<dbReference type="InterPro" id="IPR003111">
    <property type="entry name" value="Lon_prtase_N"/>
</dbReference>
<dbReference type="InterPro" id="IPR046336">
    <property type="entry name" value="Lon_prtase_N_sf"/>
</dbReference>
<dbReference type="InterPro" id="IPR027503">
    <property type="entry name" value="Lonm_euk"/>
</dbReference>
<dbReference type="InterPro" id="IPR027417">
    <property type="entry name" value="P-loop_NTPase"/>
</dbReference>
<dbReference type="InterPro" id="IPR008268">
    <property type="entry name" value="Peptidase_S16_AS"/>
</dbReference>
<dbReference type="InterPro" id="IPR015947">
    <property type="entry name" value="PUA-like_sf"/>
</dbReference>
<dbReference type="InterPro" id="IPR020568">
    <property type="entry name" value="Ribosomal_Su5_D2-typ_SF"/>
</dbReference>
<dbReference type="InterPro" id="IPR014721">
    <property type="entry name" value="Ribsml_uS5_D2-typ_fold_subgr"/>
</dbReference>
<dbReference type="NCBIfam" id="TIGR00763">
    <property type="entry name" value="lon"/>
    <property type="match status" value="1"/>
</dbReference>
<dbReference type="PANTHER" id="PTHR43718">
    <property type="entry name" value="LON PROTEASE"/>
    <property type="match status" value="1"/>
</dbReference>
<dbReference type="PANTHER" id="PTHR43718:SF14">
    <property type="entry name" value="LON PROTEASE HOMOLOG 3, MITOCHONDRIAL-RELATED"/>
    <property type="match status" value="1"/>
</dbReference>
<dbReference type="Pfam" id="PF00004">
    <property type="entry name" value="AAA"/>
    <property type="match status" value="1"/>
</dbReference>
<dbReference type="Pfam" id="PF05362">
    <property type="entry name" value="Lon_C"/>
    <property type="match status" value="1"/>
</dbReference>
<dbReference type="Pfam" id="PF22667">
    <property type="entry name" value="Lon_lid"/>
    <property type="match status" value="1"/>
</dbReference>
<dbReference type="Pfam" id="PF02190">
    <property type="entry name" value="LON_substr_bdg"/>
    <property type="match status" value="1"/>
</dbReference>
<dbReference type="PIRSF" id="PIRSF001174">
    <property type="entry name" value="Lon_proteas"/>
    <property type="match status" value="1"/>
</dbReference>
<dbReference type="PRINTS" id="PR00830">
    <property type="entry name" value="ENDOLAPTASE"/>
</dbReference>
<dbReference type="SMART" id="SM00382">
    <property type="entry name" value="AAA"/>
    <property type="match status" value="1"/>
</dbReference>
<dbReference type="SMART" id="SM00464">
    <property type="entry name" value="LON"/>
    <property type="match status" value="1"/>
</dbReference>
<dbReference type="SUPFAM" id="SSF52540">
    <property type="entry name" value="P-loop containing nucleoside triphosphate hydrolases"/>
    <property type="match status" value="1"/>
</dbReference>
<dbReference type="SUPFAM" id="SSF88697">
    <property type="entry name" value="PUA domain-like"/>
    <property type="match status" value="1"/>
</dbReference>
<dbReference type="SUPFAM" id="SSF54211">
    <property type="entry name" value="Ribosomal protein S5 domain 2-like"/>
    <property type="match status" value="1"/>
</dbReference>
<dbReference type="PROSITE" id="PS51787">
    <property type="entry name" value="LON_N"/>
    <property type="match status" value="1"/>
</dbReference>
<dbReference type="PROSITE" id="PS51786">
    <property type="entry name" value="LON_PROTEOLYTIC"/>
    <property type="match status" value="1"/>
</dbReference>
<dbReference type="PROSITE" id="PS01046">
    <property type="entry name" value="LON_SER"/>
    <property type="match status" value="1"/>
</dbReference>
<gene>
    <name type="primary">LON4</name>
    <name type="ordered locus">At3g05790</name>
    <name type="ORF">F10A16.8</name>
</gene>
<evidence type="ECO:0000250" key="1">
    <source>
        <dbReference type="UniProtKB" id="P93655"/>
    </source>
</evidence>
<evidence type="ECO:0000255" key="2">
    <source>
        <dbReference type="HAMAP-Rule" id="MF_03120"/>
    </source>
</evidence>
<evidence type="ECO:0000255" key="3">
    <source>
        <dbReference type="PROSITE-ProRule" id="PRU01122"/>
    </source>
</evidence>
<evidence type="ECO:0000255" key="4">
    <source>
        <dbReference type="PROSITE-ProRule" id="PRU01123"/>
    </source>
</evidence>
<evidence type="ECO:0000256" key="5">
    <source>
        <dbReference type="SAM" id="MobiDB-lite"/>
    </source>
</evidence>
<evidence type="ECO:0000269" key="6">
    <source>
    </source>
</evidence>
<feature type="chain" id="PRO_0000045425" description="Lon protease homolog 4, chloroplastic/mitochondrial">
    <location>
        <begin position="1"/>
        <end position="942"/>
    </location>
</feature>
<feature type="domain" description="Lon N-terminal" evidence="4">
    <location>
        <begin position="79"/>
        <end position="301"/>
    </location>
</feature>
<feature type="domain" description="Lon proteolytic" evidence="3">
    <location>
        <begin position="756"/>
        <end position="940"/>
    </location>
</feature>
<feature type="region of interest" description="Disordered" evidence="5">
    <location>
        <begin position="673"/>
        <end position="725"/>
    </location>
</feature>
<feature type="compositionally biased region" description="Basic and acidic residues" evidence="5">
    <location>
        <begin position="682"/>
        <end position="692"/>
    </location>
</feature>
<feature type="compositionally biased region" description="Polar residues" evidence="5">
    <location>
        <begin position="695"/>
        <end position="705"/>
    </location>
</feature>
<feature type="active site" evidence="2">
    <location>
        <position position="846"/>
    </location>
</feature>
<feature type="active site" evidence="2">
    <location>
        <position position="889"/>
    </location>
</feature>
<feature type="binding site" evidence="2">
    <location>
        <begin position="456"/>
        <end position="463"/>
    </location>
    <ligand>
        <name>ATP</name>
        <dbReference type="ChEBI" id="CHEBI:30616"/>
    </ligand>
</feature>
<feature type="modified residue" description="Phosphoserine" evidence="1">
    <location>
        <position position="54"/>
    </location>
</feature>
<accession>Q9M9L7</accession>
<comment type="function">
    <text evidence="2">ATP-dependent serine protease that mediates the selective degradation of misfolded, unassembled or oxidatively damaged polypeptides as well as certain short-lived regulatory proteins in the mitochondrial matrix. May also have a chaperone function in the assembly of inner membrane protein complexes. Participates in the regulation of mitochondrial gene expression and in the maintenance of the integrity of the mitochondrial genome. Binds to mitochondrial DNA in a site-specific manner.</text>
</comment>
<comment type="catalytic activity">
    <reaction evidence="2">
        <text>Hydrolysis of proteins in presence of ATP.</text>
        <dbReference type="EC" id="3.4.21.53"/>
    </reaction>
</comment>
<comment type="subunit">
    <text evidence="2">Homohexamer or homoheptamer. Organized in a ring with a central cavity.</text>
</comment>
<comment type="subcellular location">
    <subcellularLocation>
        <location evidence="2 6">Mitochondrion matrix</location>
    </subcellularLocation>
    <subcellularLocation>
        <location evidence="6">Plastid</location>
        <location evidence="6">Chloroplast thylakoid membrane</location>
        <topology evidence="6">Peripheral membrane protein</topology>
        <orientation evidence="6">Stromal side</orientation>
    </subcellularLocation>
</comment>
<comment type="miscellaneous">
    <text evidence="2">This protein may be expected to contain an N-terminal transit peptide but none has been predicted.</text>
</comment>
<comment type="similarity">
    <text evidence="2">Belongs to the peptidase S16 family.</text>
</comment>
<keyword id="KW-0067">ATP-binding</keyword>
<keyword id="KW-0150">Chloroplast</keyword>
<keyword id="KW-0238">DNA-binding</keyword>
<keyword id="KW-0378">Hydrolase</keyword>
<keyword id="KW-0472">Membrane</keyword>
<keyword id="KW-0496">Mitochondrion</keyword>
<keyword id="KW-0547">Nucleotide-binding</keyword>
<keyword id="KW-0597">Phosphoprotein</keyword>
<keyword id="KW-0934">Plastid</keyword>
<keyword id="KW-0645">Protease</keyword>
<keyword id="KW-1185">Reference proteome</keyword>
<keyword id="KW-0720">Serine protease</keyword>
<keyword id="KW-0793">Thylakoid</keyword>
<sequence length="942" mass="104925">MLKFLTPTAYASHHVTPATRFRSTPVKNLLFKQLTLLTGWNRSSYELGRRSFSSDLDSDTKSSTTTVSAKPHLDDCLTVIALPLPHKPLIPGFYMPIYVKDPKVLAALQESRRQQAPYAGAFLLKDDASSDSSSSSETENILEKLKGKELINRIHEVGTLAQISSIQGEQVILIGHRQLRITEMVSESEDPLTVKVDHLKDKPYDKDDDVIKATYFQVMSTLRDVLKTTSLWRDHVRTYTQACSLHIWHCLRHIGEFNYPKLADFGAGISGANKHQNQGVLEELDVHKRLELTLELVKKEVEINKIQESIAKAVEEKFSGDRRRIILKEQINAIKKELGGETDSKSALSEKFRGRIDPIKDKIPGHVLKVIEEELKKLQLLETSSSEFDVTCNYLDWLTVLPWGNFSDENFNVLRAEKILDEDHYGLSDVKERILEFIAVGGLRGTSQGKIICLSGPTGVGKTSIGRSIARALDRKFFRFSVGGLSDVAEIKGHRRTYIGAMPGKMVQCLKNVGTENPLVLIDEIDKLGVRGHHGDPASAMLELLDPEQNANFLDHYLDVPIDLSKVLFVCTANVTDTIPGPLLDRMEVITLSGYITDEKMHIARDYLEKTARRDCGIKPEQVDVSDAAFLSLIEHYCREAGVRNLQKQIEKIFRKIALKLVRKAASTEVPRISDDVTTDTEETKSLAKTDLESPETSAEGSTVLTDELATGDPTESTTEQSGEVAETVEKYMIDESNLSDYVGKPVFQEEKIYEQTPVGVVMGLAWTSMGGSTLYIETTFVEEGEGKGGLHITGRLGDVMKESAEIAHTVARRIMLEKEPENKLFANSKLHLHVPAGATPKDGPSAGCTMITSLLSLALKKPVRKDLAMTGEVTLTGRILAIGGVKEKTIAARRSQVKVIIFPEANRRDFDELARNVKEGLEVHFVDEYEQIFELAFGYDH</sequence>
<reference key="1">
    <citation type="journal article" date="2000" name="Nature">
        <title>Sequence and analysis of chromosome 3 of the plant Arabidopsis thaliana.</title>
        <authorList>
            <person name="Salanoubat M."/>
            <person name="Lemcke K."/>
            <person name="Rieger M."/>
            <person name="Ansorge W."/>
            <person name="Unseld M."/>
            <person name="Fartmann B."/>
            <person name="Valle G."/>
            <person name="Bloecker H."/>
            <person name="Perez-Alonso M."/>
            <person name="Obermaier B."/>
            <person name="Delseny M."/>
            <person name="Boutry M."/>
            <person name="Grivell L.A."/>
            <person name="Mache R."/>
            <person name="Puigdomenech P."/>
            <person name="De Simone V."/>
            <person name="Choisne N."/>
            <person name="Artiguenave F."/>
            <person name="Robert C."/>
            <person name="Brottier P."/>
            <person name="Wincker P."/>
            <person name="Cattolico L."/>
            <person name="Weissenbach J."/>
            <person name="Saurin W."/>
            <person name="Quetier F."/>
            <person name="Schaefer M."/>
            <person name="Mueller-Auer S."/>
            <person name="Gabel C."/>
            <person name="Fuchs M."/>
            <person name="Benes V."/>
            <person name="Wurmbach E."/>
            <person name="Drzonek H."/>
            <person name="Erfle H."/>
            <person name="Jordan N."/>
            <person name="Bangert S."/>
            <person name="Wiedelmann R."/>
            <person name="Kranz H."/>
            <person name="Voss H."/>
            <person name="Holland R."/>
            <person name="Brandt P."/>
            <person name="Nyakatura G."/>
            <person name="Vezzi A."/>
            <person name="D'Angelo M."/>
            <person name="Pallavicini A."/>
            <person name="Toppo S."/>
            <person name="Simionati B."/>
            <person name="Conrad A."/>
            <person name="Hornischer K."/>
            <person name="Kauer G."/>
            <person name="Loehnert T.-H."/>
            <person name="Nordsiek G."/>
            <person name="Reichelt J."/>
            <person name="Scharfe M."/>
            <person name="Schoen O."/>
            <person name="Bargues M."/>
            <person name="Terol J."/>
            <person name="Climent J."/>
            <person name="Navarro P."/>
            <person name="Collado C."/>
            <person name="Perez-Perez A."/>
            <person name="Ottenwaelder B."/>
            <person name="Duchemin D."/>
            <person name="Cooke R."/>
            <person name="Laudie M."/>
            <person name="Berger-Llauro C."/>
            <person name="Purnelle B."/>
            <person name="Masuy D."/>
            <person name="de Haan M."/>
            <person name="Maarse A.C."/>
            <person name="Alcaraz J.-P."/>
            <person name="Cottet A."/>
            <person name="Casacuberta E."/>
            <person name="Monfort A."/>
            <person name="Argiriou A."/>
            <person name="Flores M."/>
            <person name="Liguori R."/>
            <person name="Vitale D."/>
            <person name="Mannhaupt G."/>
            <person name="Haase D."/>
            <person name="Schoof H."/>
            <person name="Rudd S."/>
            <person name="Zaccaria P."/>
            <person name="Mewes H.-W."/>
            <person name="Mayer K.F.X."/>
            <person name="Kaul S."/>
            <person name="Town C.D."/>
            <person name="Koo H.L."/>
            <person name="Tallon L.J."/>
            <person name="Jenkins J."/>
            <person name="Rooney T."/>
            <person name="Rizzo M."/>
            <person name="Walts A."/>
            <person name="Utterback T."/>
            <person name="Fujii C.Y."/>
            <person name="Shea T.P."/>
            <person name="Creasy T.H."/>
            <person name="Haas B."/>
            <person name="Maiti R."/>
            <person name="Wu D."/>
            <person name="Peterson J."/>
            <person name="Van Aken S."/>
            <person name="Pai G."/>
            <person name="Militscher J."/>
            <person name="Sellers P."/>
            <person name="Gill J.E."/>
            <person name="Feldblyum T.V."/>
            <person name="Preuss D."/>
            <person name="Lin X."/>
            <person name="Nierman W.C."/>
            <person name="Salzberg S.L."/>
            <person name="White O."/>
            <person name="Venter J.C."/>
            <person name="Fraser C.M."/>
            <person name="Kaneko T."/>
            <person name="Nakamura Y."/>
            <person name="Sato S."/>
            <person name="Kato T."/>
            <person name="Asamizu E."/>
            <person name="Sasamoto S."/>
            <person name="Kimura T."/>
            <person name="Idesawa K."/>
            <person name="Kawashima K."/>
            <person name="Kishida Y."/>
            <person name="Kiyokawa C."/>
            <person name="Kohara M."/>
            <person name="Matsumoto M."/>
            <person name="Matsuno A."/>
            <person name="Muraki A."/>
            <person name="Nakayama S."/>
            <person name="Nakazaki N."/>
            <person name="Shinpo S."/>
            <person name="Takeuchi C."/>
            <person name="Wada T."/>
            <person name="Watanabe A."/>
            <person name="Yamada M."/>
            <person name="Yasuda M."/>
            <person name="Tabata S."/>
        </authorList>
    </citation>
    <scope>NUCLEOTIDE SEQUENCE [LARGE SCALE GENOMIC DNA]</scope>
    <source>
        <strain>cv. Columbia</strain>
    </source>
</reference>
<reference key="2">
    <citation type="journal article" date="2017" name="Plant J.">
        <title>Araport11: a complete reannotation of the Arabidopsis thaliana reference genome.</title>
        <authorList>
            <person name="Cheng C.Y."/>
            <person name="Krishnakumar V."/>
            <person name="Chan A.P."/>
            <person name="Thibaud-Nissen F."/>
            <person name="Schobel S."/>
            <person name="Town C.D."/>
        </authorList>
    </citation>
    <scope>GENOME REANNOTATION</scope>
    <source>
        <strain>cv. Columbia</strain>
    </source>
</reference>
<reference key="3">
    <citation type="journal article" date="2007" name="Plant Cell Physiol.">
        <title>Multiple intracellular locations of Lon protease in Arabidopsis: evidence for the localization of AtLon4 to chloroplasts.</title>
        <authorList>
            <person name="Ostersetzer O."/>
            <person name="Kato Y."/>
            <person name="Adam Z."/>
            <person name="Sakamoto W."/>
        </authorList>
    </citation>
    <scope>SUBCELLULAR LOCATION</scope>
</reference>
<protein>
    <recommendedName>
        <fullName>Lon protease homolog 4, chloroplastic/mitochondrial</fullName>
        <shortName>AtLon4</shortName>
        <ecNumber evidence="2">3.4.21.53</ecNumber>
    </recommendedName>
</protein>
<proteinExistence type="inferred from homology"/>